<comment type="function">
    <text evidence="1">This is one of the proteins that bind and probably mediate the attachment of the 5S RNA into the large ribosomal subunit, where it forms part of the central protuberance. In the 70S ribosome it contacts protein S13 of the 30S subunit (bridge B1b), connecting the 2 subunits; this bridge is implicated in subunit movement. Contacts the P site tRNA; the 5S rRNA and some of its associated proteins might help stabilize positioning of ribosome-bound tRNAs.</text>
</comment>
<comment type="subunit">
    <text evidence="1">Part of the 50S ribosomal subunit; part of the 5S rRNA/L5/L18/L25 subcomplex. Contacts the 5S rRNA and the P site tRNA. Forms a bridge to the 30S subunit in the 70S ribosome.</text>
</comment>
<comment type="similarity">
    <text evidence="1">Belongs to the universal ribosomal protein uL5 family.</text>
</comment>
<reference key="1">
    <citation type="submission" date="2006-10" db="EMBL/GenBank/DDBJ databases">
        <authorList>
            <person name="Fleischmann R.D."/>
            <person name="Dodson R.J."/>
            <person name="Haft D.H."/>
            <person name="Merkel J.S."/>
            <person name="Nelson W.C."/>
            <person name="Fraser C.M."/>
        </authorList>
    </citation>
    <scope>NUCLEOTIDE SEQUENCE [LARGE SCALE GENOMIC DNA]</scope>
    <source>
        <strain>ATCC 700084 / mc(2)155</strain>
    </source>
</reference>
<reference key="2">
    <citation type="journal article" date="2007" name="Genome Biol.">
        <title>Interrupted coding sequences in Mycobacterium smegmatis: authentic mutations or sequencing errors?</title>
        <authorList>
            <person name="Deshayes C."/>
            <person name="Perrodou E."/>
            <person name="Gallien S."/>
            <person name="Euphrasie D."/>
            <person name="Schaeffer C."/>
            <person name="Van-Dorsselaer A."/>
            <person name="Poch O."/>
            <person name="Lecompte O."/>
            <person name="Reyrat J.-M."/>
        </authorList>
    </citation>
    <scope>NUCLEOTIDE SEQUENCE [LARGE SCALE GENOMIC DNA]</scope>
    <source>
        <strain>ATCC 700084 / mc(2)155</strain>
    </source>
</reference>
<reference key="3">
    <citation type="journal article" date="2009" name="Genome Res.">
        <title>Ortho-proteogenomics: multiple proteomes investigation through orthology and a new MS-based protocol.</title>
        <authorList>
            <person name="Gallien S."/>
            <person name="Perrodou E."/>
            <person name="Carapito C."/>
            <person name="Deshayes C."/>
            <person name="Reyrat J.-M."/>
            <person name="Van Dorsselaer A."/>
            <person name="Poch O."/>
            <person name="Schaeffer C."/>
            <person name="Lecompte O."/>
        </authorList>
    </citation>
    <scope>NUCLEOTIDE SEQUENCE [LARGE SCALE GENOMIC DNA]</scope>
    <scope>IDENTIFICATION BY MASS SPECTROMETRY [LARGE SCALE ANALYSIS]</scope>
    <scope>CLEAVAGE OF INITIATOR METHIONINE</scope>
    <source>
        <strain>ATCC 700084 / mc(2)155</strain>
    </source>
</reference>
<protein>
    <recommendedName>
        <fullName evidence="1">Large ribosomal subunit protein uL5</fullName>
    </recommendedName>
    <alternativeName>
        <fullName evidence="3">50S ribosomal protein L5</fullName>
    </alternativeName>
</protein>
<gene>
    <name evidence="1" type="primary">rplE</name>
    <name type="ordered locus">MSMEG_1467</name>
    <name type="ordered locus">MSMEI_1431</name>
</gene>
<dbReference type="EMBL" id="CP000480">
    <property type="protein sequence ID" value="ABK75083.1"/>
    <property type="molecule type" value="Genomic_DNA"/>
</dbReference>
<dbReference type="EMBL" id="CP001663">
    <property type="protein sequence ID" value="AFP37904.1"/>
    <property type="molecule type" value="Genomic_DNA"/>
</dbReference>
<dbReference type="RefSeq" id="WP_003892854.1">
    <property type="nucleotide sequence ID" value="NZ_SIJM01000016.1"/>
</dbReference>
<dbReference type="RefSeq" id="YP_885849.1">
    <property type="nucleotide sequence ID" value="NC_008596.1"/>
</dbReference>
<dbReference type="PDB" id="5O60">
    <property type="method" value="EM"/>
    <property type="resolution" value="3.20 A"/>
    <property type="chains" value="F=1-187"/>
</dbReference>
<dbReference type="PDB" id="5O61">
    <property type="method" value="EM"/>
    <property type="resolution" value="3.31 A"/>
    <property type="chains" value="F=1-187"/>
</dbReference>
<dbReference type="PDB" id="5XYM">
    <property type="method" value="EM"/>
    <property type="resolution" value="3.08 A"/>
    <property type="chains" value="F=1-187"/>
</dbReference>
<dbReference type="PDB" id="5ZEB">
    <property type="method" value="EM"/>
    <property type="resolution" value="3.40 A"/>
    <property type="chains" value="F=1-187"/>
</dbReference>
<dbReference type="PDB" id="5ZEP">
    <property type="method" value="EM"/>
    <property type="resolution" value="3.40 A"/>
    <property type="chains" value="F=1-187"/>
</dbReference>
<dbReference type="PDB" id="5ZET">
    <property type="method" value="EM"/>
    <property type="resolution" value="3.20 A"/>
    <property type="chains" value="F=1-187"/>
</dbReference>
<dbReference type="PDB" id="6DZI">
    <property type="method" value="EM"/>
    <property type="resolution" value="3.46 A"/>
    <property type="chains" value="F=6-187"/>
</dbReference>
<dbReference type="PDB" id="6DZP">
    <property type="method" value="EM"/>
    <property type="resolution" value="3.42 A"/>
    <property type="chains" value="F=2-187"/>
</dbReference>
<dbReference type="PDB" id="7S0S">
    <property type="method" value="EM"/>
    <property type="resolution" value="3.05 A"/>
    <property type="chains" value="G=6-187"/>
</dbReference>
<dbReference type="PDB" id="7XAM">
    <property type="method" value="EM"/>
    <property type="resolution" value="2.80 A"/>
    <property type="chains" value="F=1-187"/>
</dbReference>
<dbReference type="PDB" id="7Y41">
    <property type="method" value="EM"/>
    <property type="resolution" value="4.10 A"/>
    <property type="chains" value="F=1-187"/>
</dbReference>
<dbReference type="PDB" id="8FR8">
    <property type="method" value="EM"/>
    <property type="resolution" value="2.76 A"/>
    <property type="chains" value="O=6-187"/>
</dbReference>
<dbReference type="PDB" id="8KAB">
    <property type="method" value="EM"/>
    <property type="resolution" value="3.30 A"/>
    <property type="chains" value="F=1-187"/>
</dbReference>
<dbReference type="PDB" id="8V9J">
    <property type="method" value="EM"/>
    <property type="resolution" value="3.10 A"/>
    <property type="chains" value="F=1-187"/>
</dbReference>
<dbReference type="PDB" id="8V9K">
    <property type="method" value="EM"/>
    <property type="resolution" value="3.10 A"/>
    <property type="chains" value="F=1-187"/>
</dbReference>
<dbReference type="PDB" id="8V9L">
    <property type="method" value="EM"/>
    <property type="resolution" value="3.00 A"/>
    <property type="chains" value="F=1-187"/>
</dbReference>
<dbReference type="PDB" id="8VIO">
    <property type="method" value="EM"/>
    <property type="resolution" value="3.26 A"/>
    <property type="chains" value="F=1-187"/>
</dbReference>
<dbReference type="PDB" id="8VK0">
    <property type="method" value="EM"/>
    <property type="resolution" value="3.14 A"/>
    <property type="chains" value="F=1-187"/>
</dbReference>
<dbReference type="PDB" id="8VK7">
    <property type="method" value="EM"/>
    <property type="resolution" value="3.09 A"/>
    <property type="chains" value="F=1-187"/>
</dbReference>
<dbReference type="PDB" id="8VKI">
    <property type="method" value="EM"/>
    <property type="resolution" value="2.96 A"/>
    <property type="chains" value="F=1-187"/>
</dbReference>
<dbReference type="PDB" id="8VKW">
    <property type="method" value="EM"/>
    <property type="resolution" value="3.44 A"/>
    <property type="chains" value="F=1-187"/>
</dbReference>
<dbReference type="PDB" id="8VR4">
    <property type="method" value="EM"/>
    <property type="resolution" value="2.80 A"/>
    <property type="chains" value="F=1-187"/>
</dbReference>
<dbReference type="PDB" id="8WHX">
    <property type="method" value="EM"/>
    <property type="resolution" value="2.80 A"/>
    <property type="chains" value="H=1-187"/>
</dbReference>
<dbReference type="PDB" id="8WHY">
    <property type="method" value="EM"/>
    <property type="resolution" value="2.70 A"/>
    <property type="chains" value="H=1-187"/>
</dbReference>
<dbReference type="PDB" id="8WI7">
    <property type="method" value="EM"/>
    <property type="resolution" value="3.50 A"/>
    <property type="chains" value="H=1-187"/>
</dbReference>
<dbReference type="PDB" id="8WI8">
    <property type="method" value="EM"/>
    <property type="resolution" value="2.70 A"/>
    <property type="chains" value="H=1-187"/>
</dbReference>
<dbReference type="PDB" id="8WIB">
    <property type="method" value="EM"/>
    <property type="resolution" value="3.50 A"/>
    <property type="chains" value="H=1-187"/>
</dbReference>
<dbReference type="PDB" id="8WIC">
    <property type="method" value="EM"/>
    <property type="resolution" value="3.50 A"/>
    <property type="chains" value="H=1-187"/>
</dbReference>
<dbReference type="PDB" id="8XZ3">
    <property type="method" value="EM"/>
    <property type="resolution" value="3.60 A"/>
    <property type="chains" value="F=6-187"/>
</dbReference>
<dbReference type="PDBsum" id="5O60"/>
<dbReference type="PDBsum" id="5O61"/>
<dbReference type="PDBsum" id="5XYM"/>
<dbReference type="PDBsum" id="5ZEB"/>
<dbReference type="PDBsum" id="5ZEP"/>
<dbReference type="PDBsum" id="5ZET"/>
<dbReference type="PDBsum" id="6DZI"/>
<dbReference type="PDBsum" id="6DZP"/>
<dbReference type="PDBsum" id="7S0S"/>
<dbReference type="PDBsum" id="7XAM"/>
<dbReference type="PDBsum" id="7Y41"/>
<dbReference type="PDBsum" id="8FR8"/>
<dbReference type="PDBsum" id="8KAB"/>
<dbReference type="PDBsum" id="8V9J"/>
<dbReference type="PDBsum" id="8V9K"/>
<dbReference type="PDBsum" id="8V9L"/>
<dbReference type="PDBsum" id="8VIO"/>
<dbReference type="PDBsum" id="8VK0"/>
<dbReference type="PDBsum" id="8VK7"/>
<dbReference type="PDBsum" id="8VKI"/>
<dbReference type="PDBsum" id="8VKW"/>
<dbReference type="PDBsum" id="8VR4"/>
<dbReference type="PDBsum" id="8WHX"/>
<dbReference type="PDBsum" id="8WHY"/>
<dbReference type="PDBsum" id="8WI7"/>
<dbReference type="PDBsum" id="8WI8"/>
<dbReference type="PDBsum" id="8WIB"/>
<dbReference type="PDBsum" id="8WIC"/>
<dbReference type="PDBsum" id="8XZ3"/>
<dbReference type="EMDB" id="EMD-29397"/>
<dbReference type="EMDB" id="EMD-33096"/>
<dbReference type="EMDB" id="EMD-33599"/>
<dbReference type="EMDB" id="EMD-37007"/>
<dbReference type="EMDB" id="EMD-3750"/>
<dbReference type="EMDB" id="EMD-3751"/>
<dbReference type="EMDB" id="EMD-37551"/>
<dbReference type="EMDB" id="EMD-37552"/>
<dbReference type="EMDB" id="EMD-37559"/>
<dbReference type="EMDB" id="EMD-37560"/>
<dbReference type="EMDB" id="EMD-37562"/>
<dbReference type="EMDB" id="EMD-37563"/>
<dbReference type="EMDB" id="EMD-38788"/>
<dbReference type="EMDB" id="EMD-43074"/>
<dbReference type="EMDB" id="EMD-43075"/>
<dbReference type="EMDB" id="EMD-43076"/>
<dbReference type="EMDB" id="EMD-43267"/>
<dbReference type="EMDB" id="EMD-43294"/>
<dbReference type="EMDB" id="EMD-43305"/>
<dbReference type="EMDB" id="EMD-43317"/>
<dbReference type="EMDB" id="EMD-43333"/>
<dbReference type="EMDB" id="EMD-43476"/>
<dbReference type="EMDB" id="EMD-6789"/>
<dbReference type="EMDB" id="EMD-6920"/>
<dbReference type="EMDB" id="EMD-6921"/>
<dbReference type="EMDB" id="EMD-6922"/>
<dbReference type="EMDB" id="EMD-8932"/>
<dbReference type="EMDB" id="EMD-8937"/>
<dbReference type="SMR" id="A0QSG1"/>
<dbReference type="IntAct" id="A0QSG1">
    <property type="interactions" value="2"/>
</dbReference>
<dbReference type="STRING" id="246196.MSMEG_1467"/>
<dbReference type="PaxDb" id="246196-MSMEI_1431"/>
<dbReference type="GeneID" id="93456309"/>
<dbReference type="KEGG" id="msb:LJ00_07330"/>
<dbReference type="KEGG" id="msg:MSMEI_1431"/>
<dbReference type="KEGG" id="msm:MSMEG_1467"/>
<dbReference type="PATRIC" id="fig|246196.19.peg.1452"/>
<dbReference type="eggNOG" id="COG0094">
    <property type="taxonomic scope" value="Bacteria"/>
</dbReference>
<dbReference type="OrthoDB" id="9806626at2"/>
<dbReference type="Proteomes" id="UP000000757">
    <property type="component" value="Chromosome"/>
</dbReference>
<dbReference type="Proteomes" id="UP000006158">
    <property type="component" value="Chromosome"/>
</dbReference>
<dbReference type="GO" id="GO:1990904">
    <property type="term" value="C:ribonucleoprotein complex"/>
    <property type="evidence" value="ECO:0007669"/>
    <property type="project" value="UniProtKB-KW"/>
</dbReference>
<dbReference type="GO" id="GO:0005840">
    <property type="term" value="C:ribosome"/>
    <property type="evidence" value="ECO:0007669"/>
    <property type="project" value="UniProtKB-KW"/>
</dbReference>
<dbReference type="GO" id="GO:0019843">
    <property type="term" value="F:rRNA binding"/>
    <property type="evidence" value="ECO:0007669"/>
    <property type="project" value="UniProtKB-UniRule"/>
</dbReference>
<dbReference type="GO" id="GO:0003735">
    <property type="term" value="F:structural constituent of ribosome"/>
    <property type="evidence" value="ECO:0007669"/>
    <property type="project" value="InterPro"/>
</dbReference>
<dbReference type="GO" id="GO:0000049">
    <property type="term" value="F:tRNA binding"/>
    <property type="evidence" value="ECO:0007669"/>
    <property type="project" value="UniProtKB-UniRule"/>
</dbReference>
<dbReference type="GO" id="GO:0006412">
    <property type="term" value="P:translation"/>
    <property type="evidence" value="ECO:0007669"/>
    <property type="project" value="UniProtKB-UniRule"/>
</dbReference>
<dbReference type="FunFam" id="3.30.1440.10:FF:000001">
    <property type="entry name" value="50S ribosomal protein L5"/>
    <property type="match status" value="1"/>
</dbReference>
<dbReference type="Gene3D" id="3.30.1440.10">
    <property type="match status" value="1"/>
</dbReference>
<dbReference type="HAMAP" id="MF_01333_B">
    <property type="entry name" value="Ribosomal_uL5_B"/>
    <property type="match status" value="1"/>
</dbReference>
<dbReference type="InterPro" id="IPR002132">
    <property type="entry name" value="Ribosomal_uL5"/>
</dbReference>
<dbReference type="InterPro" id="IPR020930">
    <property type="entry name" value="Ribosomal_uL5_bac-type"/>
</dbReference>
<dbReference type="InterPro" id="IPR031309">
    <property type="entry name" value="Ribosomal_uL5_C"/>
</dbReference>
<dbReference type="InterPro" id="IPR022803">
    <property type="entry name" value="Ribosomal_uL5_dom_sf"/>
</dbReference>
<dbReference type="InterPro" id="IPR031310">
    <property type="entry name" value="Ribosomal_uL5_N"/>
</dbReference>
<dbReference type="NCBIfam" id="NF000585">
    <property type="entry name" value="PRK00010.1"/>
    <property type="match status" value="1"/>
</dbReference>
<dbReference type="PANTHER" id="PTHR11994">
    <property type="entry name" value="60S RIBOSOMAL PROTEIN L11-RELATED"/>
    <property type="match status" value="1"/>
</dbReference>
<dbReference type="Pfam" id="PF00281">
    <property type="entry name" value="Ribosomal_L5"/>
    <property type="match status" value="1"/>
</dbReference>
<dbReference type="Pfam" id="PF00673">
    <property type="entry name" value="Ribosomal_L5_C"/>
    <property type="match status" value="1"/>
</dbReference>
<dbReference type="PIRSF" id="PIRSF002161">
    <property type="entry name" value="Ribosomal_L5"/>
    <property type="match status" value="1"/>
</dbReference>
<dbReference type="SUPFAM" id="SSF55282">
    <property type="entry name" value="RL5-like"/>
    <property type="match status" value="1"/>
</dbReference>
<evidence type="ECO:0000255" key="1">
    <source>
        <dbReference type="HAMAP-Rule" id="MF_01333"/>
    </source>
</evidence>
<evidence type="ECO:0000269" key="2">
    <source>
    </source>
</evidence>
<evidence type="ECO:0000305" key="3"/>
<evidence type="ECO:0007829" key="4">
    <source>
        <dbReference type="PDB" id="5O60"/>
    </source>
</evidence>
<evidence type="ECO:0007829" key="5">
    <source>
        <dbReference type="PDB" id="5XYM"/>
    </source>
</evidence>
<keyword id="KW-0002">3D-structure</keyword>
<keyword id="KW-1185">Reference proteome</keyword>
<keyword id="KW-0687">Ribonucleoprotein</keyword>
<keyword id="KW-0689">Ribosomal protein</keyword>
<keyword id="KW-0694">RNA-binding</keyword>
<keyword id="KW-0699">rRNA-binding</keyword>
<keyword id="KW-0820">tRNA-binding</keyword>
<proteinExistence type="evidence at protein level"/>
<accession>A0QSG1</accession>
<accession>I7G5P8</accession>
<organism>
    <name type="scientific">Mycolicibacterium smegmatis (strain ATCC 700084 / mc(2)155)</name>
    <name type="common">Mycobacterium smegmatis</name>
    <dbReference type="NCBI Taxonomy" id="246196"/>
    <lineage>
        <taxon>Bacteria</taxon>
        <taxon>Bacillati</taxon>
        <taxon>Actinomycetota</taxon>
        <taxon>Actinomycetes</taxon>
        <taxon>Mycobacteriales</taxon>
        <taxon>Mycobacteriaceae</taxon>
        <taxon>Mycolicibacterium</taxon>
    </lineage>
</organism>
<name>RL5_MYCS2</name>
<sequence>MTTTEKALPRLKQRYREEIREALQQEFNYANVMQIPGVVKVVVNMGVGDAARDAKLINGAINDLALITGQKPEVRRARKSIAQFKLREGMPIGARVTLRGDRMWEFLDRLISIALPRIRDFRGLSPKQFDGTGNYTFGLNEQSMFHEIDVDSIDRPRGMDITVVTTATNDAEGRALLRALGFPFKEN</sequence>
<feature type="initiator methionine" description="Removed" evidence="2">
    <location>
        <position position="1"/>
    </location>
</feature>
<feature type="chain" id="PRO_1000052777" description="Large ribosomal subunit protein uL5">
    <location>
        <begin position="2"/>
        <end position="187"/>
    </location>
</feature>
<feature type="helix" evidence="5">
    <location>
        <begin position="12"/>
        <end position="16"/>
    </location>
</feature>
<feature type="helix" evidence="5">
    <location>
        <begin position="18"/>
        <end position="26"/>
    </location>
</feature>
<feature type="helix" evidence="4">
    <location>
        <begin position="32"/>
        <end position="34"/>
    </location>
</feature>
<feature type="strand" evidence="5">
    <location>
        <begin position="38"/>
        <end position="44"/>
    </location>
</feature>
<feature type="helix" evidence="5">
    <location>
        <begin position="48"/>
        <end position="52"/>
    </location>
</feature>
<feature type="helix" evidence="5">
    <location>
        <begin position="54"/>
        <end position="56"/>
    </location>
</feature>
<feature type="helix" evidence="5">
    <location>
        <begin position="57"/>
        <end position="67"/>
    </location>
</feature>
<feature type="strand" evidence="5">
    <location>
        <begin position="68"/>
        <end position="70"/>
    </location>
</feature>
<feature type="strand" evidence="5">
    <location>
        <begin position="73"/>
        <end position="76"/>
    </location>
</feature>
<feature type="turn" evidence="5">
    <location>
        <begin position="82"/>
        <end position="85"/>
    </location>
</feature>
<feature type="strand" evidence="5">
    <location>
        <begin position="91"/>
        <end position="98"/>
    </location>
</feature>
<feature type="helix" evidence="5">
    <location>
        <begin position="102"/>
        <end position="111"/>
    </location>
</feature>
<feature type="turn" evidence="5">
    <location>
        <begin position="112"/>
        <end position="114"/>
    </location>
</feature>
<feature type="helix" evidence="4">
    <location>
        <begin position="115"/>
        <end position="117"/>
    </location>
</feature>
<feature type="helix" evidence="4">
    <location>
        <begin position="126"/>
        <end position="128"/>
    </location>
</feature>
<feature type="strand" evidence="5">
    <location>
        <begin position="131"/>
        <end position="133"/>
    </location>
</feature>
<feature type="strand" evidence="5">
    <location>
        <begin position="135"/>
        <end position="138"/>
    </location>
</feature>
<feature type="helix" evidence="5">
    <location>
        <begin position="142"/>
        <end position="144"/>
    </location>
</feature>
<feature type="strand" evidence="5">
    <location>
        <begin position="145"/>
        <end position="148"/>
    </location>
</feature>
<feature type="helix" evidence="4">
    <location>
        <begin position="150"/>
        <end position="152"/>
    </location>
</feature>
<feature type="strand" evidence="5">
    <location>
        <begin position="160"/>
        <end position="166"/>
    </location>
</feature>
<feature type="helix" evidence="5">
    <location>
        <begin position="170"/>
        <end position="179"/>
    </location>
</feature>